<accession>Q6NDR7</accession>
<sequence>MSNLENLQSQILADIAAAADEAALEAVRVGALGKKGSISALLATLGKMDPEQRKTEGAAINRAKEAVTDALTARRDVLKAAALDAKLAAETIDVTLPMREPAAEQGRLHPLSQVWDELTAIFADMGFSIAEGPDIETDDYNFTKLNFPEGHPAREMHDTFYFNPKEDGSRLLLRTHTSPVQVRTMLSQRPPIRVICPGRTYRSDSDQTHTPMFHQVEGLVIDKGSHLGHLKWILHEFCKAFFEVDNVNMRFRPSFFPFTEPSLEVDIQCRRGKDEIRFGEGEDWLEILGCGMVHPNVLTACGLDPDEYQGFAWGMGIDRIAMLKYGMSDLRQLFEADVRWLNHYGFKPLDIPTLAGGLSS</sequence>
<dbReference type="EC" id="6.1.1.20" evidence="1"/>
<dbReference type="EMBL" id="BX572593">
    <property type="protein sequence ID" value="CAE25481.1"/>
    <property type="molecule type" value="Genomic_DNA"/>
</dbReference>
<dbReference type="RefSeq" id="WP_011155608.1">
    <property type="nucleotide sequence ID" value="NZ_CP116810.1"/>
</dbReference>
<dbReference type="SMR" id="Q6NDR7"/>
<dbReference type="STRING" id="258594.RPA0037"/>
<dbReference type="GeneID" id="66891036"/>
<dbReference type="eggNOG" id="COG0016">
    <property type="taxonomic scope" value="Bacteria"/>
</dbReference>
<dbReference type="HOGENOM" id="CLU_025086_0_1_5"/>
<dbReference type="PhylomeDB" id="Q6NDR7"/>
<dbReference type="GO" id="GO:0005737">
    <property type="term" value="C:cytoplasm"/>
    <property type="evidence" value="ECO:0007669"/>
    <property type="project" value="UniProtKB-SubCell"/>
</dbReference>
<dbReference type="GO" id="GO:0005524">
    <property type="term" value="F:ATP binding"/>
    <property type="evidence" value="ECO:0007669"/>
    <property type="project" value="UniProtKB-UniRule"/>
</dbReference>
<dbReference type="GO" id="GO:0000287">
    <property type="term" value="F:magnesium ion binding"/>
    <property type="evidence" value="ECO:0007669"/>
    <property type="project" value="UniProtKB-UniRule"/>
</dbReference>
<dbReference type="GO" id="GO:0004826">
    <property type="term" value="F:phenylalanine-tRNA ligase activity"/>
    <property type="evidence" value="ECO:0007669"/>
    <property type="project" value="UniProtKB-UniRule"/>
</dbReference>
<dbReference type="GO" id="GO:0000049">
    <property type="term" value="F:tRNA binding"/>
    <property type="evidence" value="ECO:0007669"/>
    <property type="project" value="InterPro"/>
</dbReference>
<dbReference type="GO" id="GO:0006432">
    <property type="term" value="P:phenylalanyl-tRNA aminoacylation"/>
    <property type="evidence" value="ECO:0007669"/>
    <property type="project" value="UniProtKB-UniRule"/>
</dbReference>
<dbReference type="CDD" id="cd00496">
    <property type="entry name" value="PheRS_alpha_core"/>
    <property type="match status" value="1"/>
</dbReference>
<dbReference type="FunFam" id="3.30.930.10:FF:000003">
    <property type="entry name" value="Phenylalanine--tRNA ligase alpha subunit"/>
    <property type="match status" value="1"/>
</dbReference>
<dbReference type="Gene3D" id="3.30.930.10">
    <property type="entry name" value="Bira Bifunctional Protein, Domain 2"/>
    <property type="match status" value="1"/>
</dbReference>
<dbReference type="HAMAP" id="MF_00281">
    <property type="entry name" value="Phe_tRNA_synth_alpha1"/>
    <property type="match status" value="1"/>
</dbReference>
<dbReference type="InterPro" id="IPR006195">
    <property type="entry name" value="aa-tRNA-synth_II"/>
</dbReference>
<dbReference type="InterPro" id="IPR045864">
    <property type="entry name" value="aa-tRNA-synth_II/BPL/LPL"/>
</dbReference>
<dbReference type="InterPro" id="IPR004529">
    <property type="entry name" value="Phe-tRNA-synth_IIc_asu"/>
</dbReference>
<dbReference type="InterPro" id="IPR004188">
    <property type="entry name" value="Phe-tRNA_ligase_II_N"/>
</dbReference>
<dbReference type="InterPro" id="IPR022911">
    <property type="entry name" value="Phe_tRNA_ligase_alpha1_bac"/>
</dbReference>
<dbReference type="InterPro" id="IPR002319">
    <property type="entry name" value="Phenylalanyl-tRNA_Synthase"/>
</dbReference>
<dbReference type="InterPro" id="IPR010978">
    <property type="entry name" value="tRNA-bd_arm"/>
</dbReference>
<dbReference type="NCBIfam" id="TIGR00468">
    <property type="entry name" value="pheS"/>
    <property type="match status" value="1"/>
</dbReference>
<dbReference type="PANTHER" id="PTHR11538:SF41">
    <property type="entry name" value="PHENYLALANINE--TRNA LIGASE, MITOCHONDRIAL"/>
    <property type="match status" value="1"/>
</dbReference>
<dbReference type="PANTHER" id="PTHR11538">
    <property type="entry name" value="PHENYLALANYL-TRNA SYNTHETASE"/>
    <property type="match status" value="1"/>
</dbReference>
<dbReference type="Pfam" id="PF02912">
    <property type="entry name" value="Phe_tRNA-synt_N"/>
    <property type="match status" value="1"/>
</dbReference>
<dbReference type="Pfam" id="PF01409">
    <property type="entry name" value="tRNA-synt_2d"/>
    <property type="match status" value="1"/>
</dbReference>
<dbReference type="SUPFAM" id="SSF55681">
    <property type="entry name" value="Class II aaRS and biotin synthetases"/>
    <property type="match status" value="1"/>
</dbReference>
<dbReference type="SUPFAM" id="SSF46589">
    <property type="entry name" value="tRNA-binding arm"/>
    <property type="match status" value="1"/>
</dbReference>
<dbReference type="PROSITE" id="PS50862">
    <property type="entry name" value="AA_TRNA_LIGASE_II"/>
    <property type="match status" value="1"/>
</dbReference>
<reference key="1">
    <citation type="journal article" date="2004" name="Nat. Biotechnol.">
        <title>Complete genome sequence of the metabolically versatile photosynthetic bacterium Rhodopseudomonas palustris.</title>
        <authorList>
            <person name="Larimer F.W."/>
            <person name="Chain P."/>
            <person name="Hauser L."/>
            <person name="Lamerdin J.E."/>
            <person name="Malfatti S."/>
            <person name="Do L."/>
            <person name="Land M.L."/>
            <person name="Pelletier D.A."/>
            <person name="Beatty J.T."/>
            <person name="Lang A.S."/>
            <person name="Tabita F.R."/>
            <person name="Gibson J.L."/>
            <person name="Hanson T.E."/>
            <person name="Bobst C."/>
            <person name="Torres y Torres J.L."/>
            <person name="Peres C."/>
            <person name="Harrison F.H."/>
            <person name="Gibson J."/>
            <person name="Harwood C.S."/>
        </authorList>
    </citation>
    <scope>NUCLEOTIDE SEQUENCE [LARGE SCALE GENOMIC DNA]</scope>
    <source>
        <strain>ATCC BAA-98 / CGA009</strain>
    </source>
</reference>
<gene>
    <name evidence="1" type="primary">pheS</name>
    <name type="ordered locus">RPA0037</name>
</gene>
<proteinExistence type="inferred from homology"/>
<feature type="chain" id="PRO_0000232019" description="Phenylalanine--tRNA ligase alpha subunit">
    <location>
        <begin position="1"/>
        <end position="360"/>
    </location>
</feature>
<feature type="binding site" evidence="1">
    <location>
        <position position="260"/>
    </location>
    <ligand>
        <name>Mg(2+)</name>
        <dbReference type="ChEBI" id="CHEBI:18420"/>
        <note>shared with beta subunit</note>
    </ligand>
</feature>
<keyword id="KW-0030">Aminoacyl-tRNA synthetase</keyword>
<keyword id="KW-0067">ATP-binding</keyword>
<keyword id="KW-0963">Cytoplasm</keyword>
<keyword id="KW-0436">Ligase</keyword>
<keyword id="KW-0460">Magnesium</keyword>
<keyword id="KW-0479">Metal-binding</keyword>
<keyword id="KW-0547">Nucleotide-binding</keyword>
<keyword id="KW-0648">Protein biosynthesis</keyword>
<comment type="catalytic activity">
    <reaction evidence="1">
        <text>tRNA(Phe) + L-phenylalanine + ATP = L-phenylalanyl-tRNA(Phe) + AMP + diphosphate + H(+)</text>
        <dbReference type="Rhea" id="RHEA:19413"/>
        <dbReference type="Rhea" id="RHEA-COMP:9668"/>
        <dbReference type="Rhea" id="RHEA-COMP:9699"/>
        <dbReference type="ChEBI" id="CHEBI:15378"/>
        <dbReference type="ChEBI" id="CHEBI:30616"/>
        <dbReference type="ChEBI" id="CHEBI:33019"/>
        <dbReference type="ChEBI" id="CHEBI:58095"/>
        <dbReference type="ChEBI" id="CHEBI:78442"/>
        <dbReference type="ChEBI" id="CHEBI:78531"/>
        <dbReference type="ChEBI" id="CHEBI:456215"/>
        <dbReference type="EC" id="6.1.1.20"/>
    </reaction>
</comment>
<comment type="cofactor">
    <cofactor evidence="1">
        <name>Mg(2+)</name>
        <dbReference type="ChEBI" id="CHEBI:18420"/>
    </cofactor>
    <text evidence="1">Binds 2 magnesium ions per tetramer.</text>
</comment>
<comment type="subunit">
    <text evidence="1">Tetramer of two alpha and two beta subunits.</text>
</comment>
<comment type="subcellular location">
    <subcellularLocation>
        <location evidence="1">Cytoplasm</location>
    </subcellularLocation>
</comment>
<comment type="similarity">
    <text evidence="1">Belongs to the class-II aminoacyl-tRNA synthetase family. Phe-tRNA synthetase alpha subunit type 1 subfamily.</text>
</comment>
<organism>
    <name type="scientific">Rhodopseudomonas palustris (strain ATCC BAA-98 / CGA009)</name>
    <dbReference type="NCBI Taxonomy" id="258594"/>
    <lineage>
        <taxon>Bacteria</taxon>
        <taxon>Pseudomonadati</taxon>
        <taxon>Pseudomonadota</taxon>
        <taxon>Alphaproteobacteria</taxon>
        <taxon>Hyphomicrobiales</taxon>
        <taxon>Nitrobacteraceae</taxon>
        <taxon>Rhodopseudomonas</taxon>
    </lineage>
</organism>
<name>SYFA_RHOPA</name>
<evidence type="ECO:0000255" key="1">
    <source>
        <dbReference type="HAMAP-Rule" id="MF_00281"/>
    </source>
</evidence>
<protein>
    <recommendedName>
        <fullName evidence="1">Phenylalanine--tRNA ligase alpha subunit</fullName>
        <ecNumber evidence="1">6.1.1.20</ecNumber>
    </recommendedName>
    <alternativeName>
        <fullName evidence="1">Phenylalanyl-tRNA synthetase alpha subunit</fullName>
        <shortName evidence="1">PheRS</shortName>
    </alternativeName>
</protein>